<keyword id="KW-0131">Cell cycle</keyword>
<keyword id="KW-0132">Cell division</keyword>
<keyword id="KW-0137">Centromere</keyword>
<keyword id="KW-0158">Chromosome</keyword>
<keyword id="KW-0175">Coiled coil</keyword>
<keyword id="KW-0963">Cytoplasm</keyword>
<keyword id="KW-0206">Cytoskeleton</keyword>
<keyword id="KW-0995">Kinetochore</keyword>
<keyword id="KW-0498">Mitosis</keyword>
<keyword id="KW-1185">Reference proteome</keyword>
<dbReference type="EMBL" id="AF240692">
    <property type="protein sequence ID" value="AAF61239.1"/>
    <property type="molecule type" value="mRNA"/>
</dbReference>
<dbReference type="EMBL" id="Z36753">
    <property type="protein sequence ID" value="CAA85342.1"/>
    <property type="molecule type" value="Genomic_DNA"/>
</dbReference>
<dbReference type="PIR" id="T24728">
    <property type="entry name" value="T24728"/>
</dbReference>
<dbReference type="RefSeq" id="NP_495654.1">
    <property type="nucleotide sequence ID" value="NM_063253.9"/>
</dbReference>
<dbReference type="SMR" id="P45970"/>
<dbReference type="BioGRID" id="39600">
    <property type="interactions" value="23"/>
</dbReference>
<dbReference type="ComplexPortal" id="CPX-4027">
    <property type="entry name" value="gpr-1-gpr-2-lin-5 complex"/>
</dbReference>
<dbReference type="DIP" id="DIP-24397N"/>
<dbReference type="FunCoup" id="P45970">
    <property type="interactions" value="162"/>
</dbReference>
<dbReference type="IntAct" id="P45970">
    <property type="interactions" value="2"/>
</dbReference>
<dbReference type="STRING" id="6239.T09A5.10.2"/>
<dbReference type="iPTMnet" id="P45970"/>
<dbReference type="PaxDb" id="6239-T09A5.10.2"/>
<dbReference type="PeptideAtlas" id="P45970"/>
<dbReference type="EnsemblMetazoa" id="T09A5.10.1">
    <property type="protein sequence ID" value="T09A5.10.1"/>
    <property type="gene ID" value="WBGene00002994"/>
</dbReference>
<dbReference type="EnsemblMetazoa" id="T09A5.10.2">
    <property type="protein sequence ID" value="T09A5.10.2"/>
    <property type="gene ID" value="WBGene00002994"/>
</dbReference>
<dbReference type="GeneID" id="174267"/>
<dbReference type="KEGG" id="cel:CELE_T09A5.10"/>
<dbReference type="UCSC" id="T09A5.10.1">
    <property type="organism name" value="c. elegans"/>
</dbReference>
<dbReference type="AGR" id="WB:WBGene00002994"/>
<dbReference type="CTD" id="174267"/>
<dbReference type="WormBase" id="T09A5.10">
    <property type="protein sequence ID" value="CE18951"/>
    <property type="gene ID" value="WBGene00002994"/>
    <property type="gene designation" value="lin-5"/>
</dbReference>
<dbReference type="eggNOG" id="ENOG502THVS">
    <property type="taxonomic scope" value="Eukaryota"/>
</dbReference>
<dbReference type="GeneTree" id="ENSGT00970000196590"/>
<dbReference type="HOGENOM" id="CLU_022152_0_0_1"/>
<dbReference type="InParanoid" id="P45970"/>
<dbReference type="OMA" id="WMGERIK"/>
<dbReference type="OrthoDB" id="5791508at2759"/>
<dbReference type="PhylomeDB" id="P45970"/>
<dbReference type="CD-CODE" id="1E117272">
    <property type="entry name" value="Centrosome"/>
</dbReference>
<dbReference type="PRO" id="PR:P45970"/>
<dbReference type="Proteomes" id="UP000001940">
    <property type="component" value="Chromosome II"/>
</dbReference>
<dbReference type="Bgee" id="WBGene00002994">
    <property type="expression patterns" value="Expressed in germ line (C elegans) and 4 other cell types or tissues"/>
</dbReference>
<dbReference type="GO" id="GO:0005938">
    <property type="term" value="C:cell cortex"/>
    <property type="evidence" value="ECO:0000314"/>
    <property type="project" value="WormBase"/>
</dbReference>
<dbReference type="GO" id="GO:0005813">
    <property type="term" value="C:centrosome"/>
    <property type="evidence" value="ECO:0007669"/>
    <property type="project" value="UniProtKB-SubCell"/>
</dbReference>
<dbReference type="GO" id="GO:0000793">
    <property type="term" value="C:condensed chromosome"/>
    <property type="evidence" value="ECO:0000314"/>
    <property type="project" value="WormBase"/>
</dbReference>
<dbReference type="GO" id="GO:0005737">
    <property type="term" value="C:cytoplasm"/>
    <property type="evidence" value="ECO:0000314"/>
    <property type="project" value="WormBase"/>
</dbReference>
<dbReference type="GO" id="GO:0000776">
    <property type="term" value="C:kinetochore"/>
    <property type="evidence" value="ECO:0007669"/>
    <property type="project" value="UniProtKB-KW"/>
</dbReference>
<dbReference type="GO" id="GO:0005828">
    <property type="term" value="C:kinetochore microtubule"/>
    <property type="evidence" value="ECO:0000314"/>
    <property type="project" value="WormBase"/>
</dbReference>
<dbReference type="GO" id="GO:0005815">
    <property type="term" value="C:microtubule organizing center"/>
    <property type="evidence" value="ECO:0000318"/>
    <property type="project" value="GO_Central"/>
</dbReference>
<dbReference type="GO" id="GO:0072686">
    <property type="term" value="C:mitotic spindle"/>
    <property type="evidence" value="ECO:0000314"/>
    <property type="project" value="ComplexPortal"/>
</dbReference>
<dbReference type="GO" id="GO:0005819">
    <property type="term" value="C:spindle"/>
    <property type="evidence" value="ECO:0000314"/>
    <property type="project" value="WormBase"/>
</dbReference>
<dbReference type="GO" id="GO:0051233">
    <property type="term" value="C:spindle midzone"/>
    <property type="evidence" value="ECO:0000314"/>
    <property type="project" value="WormBase"/>
</dbReference>
<dbReference type="GO" id="GO:0000922">
    <property type="term" value="C:spindle pole"/>
    <property type="evidence" value="ECO:0000314"/>
    <property type="project" value="WormBase"/>
</dbReference>
<dbReference type="GO" id="GO:0070840">
    <property type="term" value="F:dynein complex binding"/>
    <property type="evidence" value="ECO:0000314"/>
    <property type="project" value="WormBase"/>
</dbReference>
<dbReference type="GO" id="GO:0051301">
    <property type="term" value="P:cell division"/>
    <property type="evidence" value="ECO:0007669"/>
    <property type="project" value="UniProtKB-KW"/>
</dbReference>
<dbReference type="GO" id="GO:0051296">
    <property type="term" value="P:establishment of meiotic spindle orientation"/>
    <property type="evidence" value="ECO:0000315"/>
    <property type="project" value="WormBase"/>
</dbReference>
<dbReference type="GO" id="GO:0040001">
    <property type="term" value="P:establishment of mitotic spindle localization"/>
    <property type="evidence" value="ECO:0000315"/>
    <property type="project" value="WormBase"/>
</dbReference>
<dbReference type="GO" id="GO:0008406">
    <property type="term" value="P:gonad development"/>
    <property type="evidence" value="ECO:0000315"/>
    <property type="project" value="WormBase"/>
</dbReference>
<dbReference type="GO" id="GO:0040011">
    <property type="term" value="P:locomotion"/>
    <property type="evidence" value="ECO:0000315"/>
    <property type="project" value="WormBase"/>
</dbReference>
<dbReference type="GO" id="GO:0000022">
    <property type="term" value="P:mitotic spindle elongation"/>
    <property type="evidence" value="ECO:0000315"/>
    <property type="project" value="WormBase"/>
</dbReference>
<dbReference type="GO" id="GO:0007399">
    <property type="term" value="P:nervous system development"/>
    <property type="evidence" value="ECO:0000315"/>
    <property type="project" value="WormBase"/>
</dbReference>
<dbReference type="GO" id="GO:0007097">
    <property type="term" value="P:nuclear migration"/>
    <property type="evidence" value="ECO:0000303"/>
    <property type="project" value="ComplexPortal"/>
</dbReference>
<dbReference type="GO" id="GO:0008277">
    <property type="term" value="P:regulation of G protein-coupled receptor signaling pathway"/>
    <property type="evidence" value="ECO:0000303"/>
    <property type="project" value="ComplexPortal"/>
</dbReference>
<dbReference type="GO" id="GO:0032880">
    <property type="term" value="P:regulation of protein localization"/>
    <property type="evidence" value="ECO:0000315"/>
    <property type="project" value="WormBase"/>
</dbReference>
<dbReference type="GO" id="GO:0022414">
    <property type="term" value="P:reproductive process"/>
    <property type="evidence" value="ECO:0000315"/>
    <property type="project" value="WormBase"/>
</dbReference>
<comment type="function">
    <text evidence="3 4">Essential component of the spindle apparatus required for spindle positioning and chromosome movement. Acts to recruit or anchor gpr-1/gpr-2 complex to the spindle and cortex. Also involved, directly or indirectly, in cytokinesis and in the coupling of DNA replication, centrosome duplication and mitotic division.</text>
</comment>
<comment type="subunit">
    <text evidence="4">Interacts with gpr-1; gpr-1 forms a complex with gpr-2 and GDP-bound goa-1.</text>
</comment>
<comment type="subcellular location">
    <subcellularLocation>
        <location evidence="5">Cytoplasm</location>
        <location evidence="5">Cell cortex</location>
    </subcellularLocation>
    <subcellularLocation>
        <location evidence="3">Cytoplasm</location>
        <location evidence="3">Cytoskeleton</location>
        <location evidence="3">Spindle</location>
    </subcellularLocation>
    <subcellularLocation>
        <location evidence="3">Chromosome</location>
        <location evidence="3">Centromere</location>
        <location evidence="3">Kinetochore</location>
    </subcellularLocation>
    <subcellularLocation>
        <location evidence="3">Cytoplasm</location>
        <location evidence="3">Cytoskeleton</location>
        <location evidence="3">Microtubule organizing center</location>
        <location evidence="3">Centrosome</location>
    </subcellularLocation>
    <text evidence="3 5">Located to the spindle apparatus in a cell cycle- and microtubule-dependent manner. Located at the centrosomes throughout mitosis, at the kinetochore microtubules in metaphase cells, and at the spindle during meiosis (PubMed:10629219). Has enriched expression in the posterior cortex of 1-cell embryos at anaphase, dependent on csnk-1 regulation of pkk-1 (PubMed:18694560).</text>
</comment>
<reference key="1">
    <citation type="journal article" date="2000" name="J. Cell Biol.">
        <title>LIN-5 is a novel component of the spindle apparatus required for chromosome segregation and cleavage plane specification in Caenorhabditis elegans.</title>
        <authorList>
            <person name="Lorson M.A."/>
            <person name="Horvitz H.R."/>
            <person name="van den Heuvel S."/>
        </authorList>
    </citation>
    <scope>NUCLEOTIDE SEQUENCE [MRNA]</scope>
    <scope>FUNCTION</scope>
    <scope>SUBCELLULAR LOCATION</scope>
    <source>
        <strain>Bristol N2</strain>
    </source>
</reference>
<reference key="2">
    <citation type="journal article" date="1998" name="Science">
        <title>Genome sequence of the nematode C. elegans: a platform for investigating biology.</title>
        <authorList>
            <consortium name="The C. elegans sequencing consortium"/>
        </authorList>
    </citation>
    <scope>NUCLEOTIDE SEQUENCE [LARGE SCALE GENOMIC DNA]</scope>
    <source>
        <strain>Bristol N2</strain>
    </source>
</reference>
<reference key="3">
    <citation type="journal article" date="2003" name="Genes Dev.">
        <title>A complex of LIN-5 and GPR proteins regulates G protein signaling and spindle function in C elegans.</title>
        <authorList>
            <person name="Srinivasan D.G."/>
            <person name="Fisk R.M."/>
            <person name="Xu H."/>
            <person name="van den Heuvel S."/>
        </authorList>
    </citation>
    <scope>FUNCTION</scope>
    <scope>INTERACTION WITH GPR-1</scope>
</reference>
<reference key="4">
    <citation type="journal article" date="2008" name="Dev. Cell">
        <title>A casein kinase 1 and PAR proteins regulate asymmetry of a PIP(2) synthesis enzyme for asymmetric spindle positioning.</title>
        <authorList>
            <person name="Panbianco C."/>
            <person name="Weinkove D."/>
            <person name="Zanin E."/>
            <person name="Jones D."/>
            <person name="Divecha N."/>
            <person name="Gotta M."/>
            <person name="Ahringer J."/>
        </authorList>
    </citation>
    <scope>SUBCELLULAR LOCATION</scope>
</reference>
<evidence type="ECO:0000255" key="1"/>
<evidence type="ECO:0000256" key="2">
    <source>
        <dbReference type="SAM" id="MobiDB-lite"/>
    </source>
</evidence>
<evidence type="ECO:0000269" key="3">
    <source>
    </source>
</evidence>
<evidence type="ECO:0000269" key="4">
    <source>
    </source>
</evidence>
<evidence type="ECO:0000269" key="5">
    <source>
    </source>
</evidence>
<gene>
    <name type="primary">lin-5</name>
    <name type="ORF">T09A5.10</name>
</gene>
<feature type="chain" id="PRO_0000084432" description="Spindle apparatus protein lin-5">
    <location>
        <begin position="1"/>
        <end position="821"/>
    </location>
</feature>
<feature type="region of interest" description="Disordered" evidence="2">
    <location>
        <begin position="161"/>
        <end position="199"/>
    </location>
</feature>
<feature type="region of interest" description="Disordered" evidence="2">
    <location>
        <begin position="736"/>
        <end position="758"/>
    </location>
</feature>
<feature type="region of interest" description="Disordered" evidence="2">
    <location>
        <begin position="779"/>
        <end position="821"/>
    </location>
</feature>
<feature type="coiled-coil region" evidence="1">
    <location>
        <begin position="211"/>
        <end position="634"/>
    </location>
</feature>
<feature type="compositionally biased region" description="Polar residues" evidence="2">
    <location>
        <begin position="162"/>
        <end position="180"/>
    </location>
</feature>
<feature type="compositionally biased region" description="Low complexity" evidence="2">
    <location>
        <begin position="181"/>
        <end position="199"/>
    </location>
</feature>
<proteinExistence type="evidence at protein level"/>
<protein>
    <recommendedName>
        <fullName>Spindle apparatus protein lin-5</fullName>
    </recommendedName>
    <alternativeName>
        <fullName>Abnormal cell lineage protein 5</fullName>
    </alternativeName>
</protein>
<sequence length="821" mass="93440">MSVSTSVVKSMLQLTNYFGSNFTPKTETISSLAELWERHGSMIASMMSCDTREFGTADKFYEVIFRKIATTSLSFMTDSLEPKLAASGDSLEICKFYALFLEYMRKDHSGMLTRALEQASSENRVDTAVLLDMFLFFDNVYSESTADDWWACLRRDDEDQEASSGFRTPKRNNYSLTSLQTPTATARRLRTASSTARRSPIAEAVDSPTMKFMRSERELKQSKARIFGLEQMLGDLEDDKTKLSAENRTLKLSNSDLKSDIAKLKGIAEEAQFRAEELSCDLEAKKDEVHNILQQLNESRMTLRSEQRSLEEADIKKENLTAKLKTVTEDNGKLMKQARELRDLNDYEFARFRQQEQELTETLRATQDQMADLQEQLTGVEKIRASLKSENESLSASVEELSVASLRNKQDADNSKTMLSEELARFEETVDKLRQEKLEALSMANSRIDALRLEHSEREKMMKSTNARLQADLDEERNEKKRLMNLWNELNEKSLNVDKAVHKSNEEFQSMGSCLQNAKRQIEQLEVACKSKDDIIKFQEEQNKRAANLIKNEKAIRDQASAQFAEKLAILKNSLAEKENETVTLKENFASVVMKHKAELEEKELFLQSRVDLIQRLEHEVADLREKESAEIKKSTWMGERIKIFQQAPMRGSRIRCGSPDSLPDFLADNGPTITEEELRAQLATFPRKSIAPSVDDNEFDKGTPIGFKSNMYDGRESICSLDFFDRSSLQRSSMRSESIQLASPSSAGEFKQPFTPSGVTKERVGVLTARNEKVKPHLKCSYASEVGSTNSPSADEENIKKSKKKNRRDSIFSAFSSKKQ</sequence>
<name>LIN5_CAEEL</name>
<organism>
    <name type="scientific">Caenorhabditis elegans</name>
    <dbReference type="NCBI Taxonomy" id="6239"/>
    <lineage>
        <taxon>Eukaryota</taxon>
        <taxon>Metazoa</taxon>
        <taxon>Ecdysozoa</taxon>
        <taxon>Nematoda</taxon>
        <taxon>Chromadorea</taxon>
        <taxon>Rhabditida</taxon>
        <taxon>Rhabditina</taxon>
        <taxon>Rhabditomorpha</taxon>
        <taxon>Rhabditoidea</taxon>
        <taxon>Rhabditidae</taxon>
        <taxon>Peloderinae</taxon>
        <taxon>Caenorhabditis</taxon>
    </lineage>
</organism>
<accession>P45970</accession>